<name>CP1B1_RAT</name>
<proteinExistence type="evidence at protein level"/>
<reference key="1">
    <citation type="journal article" date="1995" name="J. Biol. Chem.">
        <title>Identification of a rat adrenal cytochrome P450 active in polycyclic hydrocarbon metabolism as rat CYP1B1. Demonstration of a unique tissue-specific pattern of hormonal and aryl hydrocarbon receptor-linked regulation.</title>
        <authorList>
            <person name="Bhattacharyya K.K."/>
            <person name="Brake P.B."/>
            <person name="Eltom S.E."/>
            <person name="Otto S.A."/>
            <person name="Jefcoate C.R."/>
        </authorList>
    </citation>
    <scope>NUCLEOTIDE SEQUENCE [MRNA]</scope>
    <scope>PARTIAL PROTEIN SEQUENCE</scope>
    <source>
        <strain>Sprague-Dawley</strain>
    </source>
</reference>
<reference key="2">
    <citation type="journal article" date="1995" name="Carcinogenesis">
        <title>Rat CYP1B1: an adrenal cytochrome P450 that exhibits sex-dependent expression in livers and kidneys of TCDD-treated animals.</title>
        <authorList>
            <person name="Walker N.J."/>
            <person name="Gastel J.A."/>
            <person name="Costa L.T."/>
            <person name="Clark G.C."/>
            <person name="Lucier G.W."/>
            <person name="Sutter T.R."/>
        </authorList>
    </citation>
    <scope>NUCLEOTIDE SEQUENCE [MRNA]</scope>
    <source>
        <strain>Sprague-Dawley</strain>
        <tissue>Liver</tissue>
    </source>
</reference>
<reference key="3">
    <citation type="journal article" date="2010" name="Rapid Commun. Mass Spectrom.">
        <title>Analysis of epoxyeicosatrienoic acids by chiral liquid chromatography/electron capture atmospheric pressure chemical ionization mass spectrometry using [13C]-analog internal standards.</title>
        <authorList>
            <person name="Mesaros C."/>
            <person name="Lee S.H."/>
            <person name="Blair I.A."/>
        </authorList>
    </citation>
    <scope>FUNCTION</scope>
    <scope>CATALYTIC ACTIVITY</scope>
</reference>
<reference key="4">
    <citation type="journal article" date="2011" name="Fluids Barriers CNS">
        <title>Aryl hydrocarbon receptor-dependent upregulation of Cyp1b1 by TCDD and diesel exhaust particles in rat brain microvessels.</title>
        <authorList>
            <person name="Jacob A."/>
            <person name="Hartz A.M."/>
            <person name="Potin S."/>
            <person name="Coumoul X."/>
            <person name="Yousif S."/>
            <person name="Scherrmann J.M."/>
            <person name="Bauer B."/>
            <person name="Decleves X."/>
        </authorList>
    </citation>
    <scope>INDUCTION</scope>
</reference>
<reference key="5">
    <citation type="journal article" date="2011" name="Mol. Cell. Biochem.">
        <title>Estradiol-mediated suppression of CYP1B1 expression in mouse MA-10 Leydig cells is independent of protein kinase A and estrogen receptor.</title>
        <authorList>
            <person name="Deb S."/>
            <person name="Tai J.K."/>
            <person name="Leung G.S."/>
            <person name="Chang T.K."/>
            <person name="Bandiera S.M."/>
        </authorList>
    </citation>
    <scope>INDUCTION</scope>
</reference>
<reference key="6">
    <citation type="journal article" date="2012" name="Environ. Toxicol. Pharmacol.">
        <title>The effect of aryl hydrocarbon receptor ligands on the expression of polymerase (DNA directed) kappa (Polkappa), polymerase RNA II (DNA directed) polypeptide A (PolR2a), CYP1B1 and CYP1A1 genes in rat liver.</title>
        <authorList>
            <person name="Brauze D."/>
            <person name="Rawluszko A.A."/>
        </authorList>
    </citation>
    <scope>INDUCTION</scope>
</reference>
<reference key="7">
    <citation type="journal article" date="2013" name="Mol. Pharmacol.">
        <title>Specificity determinants of CYP1B1 estradiol hydroxylation.</title>
        <authorList>
            <person name="Nishida C.R."/>
            <person name="Everett S."/>
            <person name="Ortiz de Montellano P.R."/>
        </authorList>
    </citation>
    <scope>MUTAGENESIS OF LEU-395</scope>
    <scope>FUNCTION IN ESTROGEN METABOLISM</scope>
    <scope>CATALYTIC ACTIVITY</scope>
    <scope>ACTIVITY REGULATION</scope>
</reference>
<gene>
    <name evidence="9 13" type="primary">Cyp1b1</name>
</gene>
<keyword id="KW-0903">Direct protein sequencing</keyword>
<keyword id="KW-0256">Endoplasmic reticulum</keyword>
<keyword id="KW-0276">Fatty acid metabolism</keyword>
<keyword id="KW-0349">Heme</keyword>
<keyword id="KW-0408">Iron</keyword>
<keyword id="KW-0443">Lipid metabolism</keyword>
<keyword id="KW-0456">Lyase</keyword>
<keyword id="KW-0472">Membrane</keyword>
<keyword id="KW-0479">Metal-binding</keyword>
<keyword id="KW-0492">Microsome</keyword>
<keyword id="KW-0496">Mitochondrion</keyword>
<keyword id="KW-0503">Monooxygenase</keyword>
<keyword id="KW-0560">Oxidoreductase</keyword>
<keyword id="KW-1185">Reference proteome</keyword>
<keyword id="KW-0753">Steroid metabolism</keyword>
<dbReference type="EC" id="1.14.14.1" evidence="8"/>
<dbReference type="EC" id="4.2.1.152" evidence="2"/>
<dbReference type="EMBL" id="X83867">
    <property type="protein sequence ID" value="CAA58748.1"/>
    <property type="molecule type" value="mRNA"/>
</dbReference>
<dbReference type="EMBL" id="U09540">
    <property type="protein sequence ID" value="AAA79864.1"/>
    <property type="molecule type" value="mRNA"/>
</dbReference>
<dbReference type="PIR" id="I48130">
    <property type="entry name" value="I48130"/>
</dbReference>
<dbReference type="RefSeq" id="NP_037072.1">
    <property type="nucleotide sequence ID" value="NM_012940.2"/>
</dbReference>
<dbReference type="RefSeq" id="XP_017449535.2">
    <property type="nucleotide sequence ID" value="XM_017594046.3"/>
</dbReference>
<dbReference type="RefSeq" id="XP_038967731.1">
    <property type="nucleotide sequence ID" value="XM_039111803.2"/>
</dbReference>
<dbReference type="SMR" id="Q64678"/>
<dbReference type="FunCoup" id="Q64678">
    <property type="interactions" value="109"/>
</dbReference>
<dbReference type="STRING" id="10116.ENSRNOP00000071724"/>
<dbReference type="SwissLipids" id="SLP:000001591"/>
<dbReference type="iPTMnet" id="Q64678"/>
<dbReference type="PhosphoSitePlus" id="Q64678"/>
<dbReference type="PaxDb" id="10116-ENSRNOP00000061222"/>
<dbReference type="Ensembl" id="ENSRNOT00000084171.2">
    <property type="protein sequence ID" value="ENSRNOP00000075074.2"/>
    <property type="gene ID" value="ENSRNOG00000040287.5"/>
</dbReference>
<dbReference type="GeneID" id="25426"/>
<dbReference type="KEGG" id="rno:25426"/>
<dbReference type="UCSC" id="RGD:2460">
    <property type="organism name" value="rat"/>
</dbReference>
<dbReference type="AGR" id="RGD:2460"/>
<dbReference type="CTD" id="1545"/>
<dbReference type="RGD" id="2460">
    <property type="gene designation" value="Cyp1b1"/>
</dbReference>
<dbReference type="eggNOG" id="KOG0156">
    <property type="taxonomic scope" value="Eukaryota"/>
</dbReference>
<dbReference type="GeneTree" id="ENSGT00950000183037"/>
<dbReference type="InParanoid" id="Q64678"/>
<dbReference type="OMA" id="QIRLGNC"/>
<dbReference type="OrthoDB" id="1055148at2759"/>
<dbReference type="PhylomeDB" id="Q64678"/>
<dbReference type="Reactome" id="R-RNO-211976">
    <property type="pathway name" value="Endogenous sterols"/>
</dbReference>
<dbReference type="Reactome" id="R-RNO-2142670">
    <property type="pathway name" value="Synthesis of epoxy (EET) and dihydroxyeicosatrienoic acids (DHET)"/>
</dbReference>
<dbReference type="Reactome" id="R-RNO-2142816">
    <property type="pathway name" value="Synthesis of (16-20)-hydroxyeicosatetraenoic acids (HETE)"/>
</dbReference>
<dbReference type="UniPathway" id="UPA00383"/>
<dbReference type="UniPathway" id="UPA00912"/>
<dbReference type="PRO" id="PR:Q64678"/>
<dbReference type="Proteomes" id="UP000002494">
    <property type="component" value="Chromosome 6"/>
</dbReference>
<dbReference type="GO" id="GO:0005789">
    <property type="term" value="C:endoplasmic reticulum membrane"/>
    <property type="evidence" value="ECO:0007669"/>
    <property type="project" value="UniProtKB-SubCell"/>
</dbReference>
<dbReference type="GO" id="GO:0043231">
    <property type="term" value="C:intracellular membrane-bounded organelle"/>
    <property type="evidence" value="ECO:0000318"/>
    <property type="project" value="GO_Central"/>
</dbReference>
<dbReference type="GO" id="GO:0005739">
    <property type="term" value="C:mitochondrion"/>
    <property type="evidence" value="ECO:0000250"/>
    <property type="project" value="UniProtKB"/>
</dbReference>
<dbReference type="GO" id="GO:0101020">
    <property type="term" value="F:estrogen 16-alpha-hydroxylase activity"/>
    <property type="evidence" value="ECO:0000250"/>
    <property type="project" value="UniProtKB"/>
</dbReference>
<dbReference type="GO" id="GO:0101021">
    <property type="term" value="F:estrogen 2-hydroxylase activity"/>
    <property type="evidence" value="ECO:0007669"/>
    <property type="project" value="RHEA"/>
</dbReference>
<dbReference type="GO" id="GO:0020037">
    <property type="term" value="F:heme binding"/>
    <property type="evidence" value="ECO:0000250"/>
    <property type="project" value="UniProtKB"/>
</dbReference>
<dbReference type="GO" id="GO:0106256">
    <property type="term" value="F:hydroperoxy icosatetraenoate dehydratase activity"/>
    <property type="evidence" value="ECO:0007669"/>
    <property type="project" value="UniProtKB-EC"/>
</dbReference>
<dbReference type="GO" id="GO:0005506">
    <property type="term" value="F:iron ion binding"/>
    <property type="evidence" value="ECO:0007669"/>
    <property type="project" value="InterPro"/>
</dbReference>
<dbReference type="GO" id="GO:0004497">
    <property type="term" value="F:monooxygenase activity"/>
    <property type="evidence" value="ECO:0000314"/>
    <property type="project" value="UniProtKB"/>
</dbReference>
<dbReference type="GO" id="GO:0016491">
    <property type="term" value="F:oxidoreductase activity"/>
    <property type="evidence" value="ECO:0000314"/>
    <property type="project" value="RGD"/>
</dbReference>
<dbReference type="GO" id="GO:0016712">
    <property type="term" value="F:oxidoreductase activity, acting on paired donors, with incorporation or reduction of molecular oxygen, reduced flavin or flavoprotein as one donor, and incorporation of one atom of oxygen"/>
    <property type="evidence" value="ECO:0000266"/>
    <property type="project" value="RGD"/>
</dbReference>
<dbReference type="GO" id="GO:0050649">
    <property type="term" value="F:testosterone 6-beta-hydroxylase activity"/>
    <property type="evidence" value="ECO:0007669"/>
    <property type="project" value="RHEA"/>
</dbReference>
<dbReference type="GO" id="GO:0030325">
    <property type="term" value="P:adrenal gland development"/>
    <property type="evidence" value="ECO:0000270"/>
    <property type="project" value="RGD"/>
</dbReference>
<dbReference type="GO" id="GO:0001525">
    <property type="term" value="P:angiogenesis"/>
    <property type="evidence" value="ECO:0000266"/>
    <property type="project" value="RGD"/>
</dbReference>
<dbReference type="GO" id="GO:0019369">
    <property type="term" value="P:arachidonate metabolic process"/>
    <property type="evidence" value="ECO:0000250"/>
    <property type="project" value="UniProtKB"/>
</dbReference>
<dbReference type="GO" id="GO:0042537">
    <property type="term" value="P:benzene-containing compound metabolic process"/>
    <property type="evidence" value="ECO:0000314"/>
    <property type="project" value="RGD"/>
</dbReference>
<dbReference type="GO" id="GO:0043534">
    <property type="term" value="P:blood vessel endothelial cell migration"/>
    <property type="evidence" value="ECO:0000266"/>
    <property type="project" value="RGD"/>
</dbReference>
<dbReference type="GO" id="GO:0048514">
    <property type="term" value="P:blood vessel morphogenesis"/>
    <property type="evidence" value="ECO:0000250"/>
    <property type="project" value="UniProtKB"/>
</dbReference>
<dbReference type="GO" id="GO:0007155">
    <property type="term" value="P:cell adhesion"/>
    <property type="evidence" value="ECO:0000250"/>
    <property type="project" value="UniProtKB"/>
</dbReference>
<dbReference type="GO" id="GO:0071320">
    <property type="term" value="P:cellular response to cAMP"/>
    <property type="evidence" value="ECO:0000270"/>
    <property type="project" value="RGD"/>
</dbReference>
<dbReference type="GO" id="GO:0071387">
    <property type="term" value="P:cellular response to cortisol stimulus"/>
    <property type="evidence" value="ECO:0000270"/>
    <property type="project" value="RGD"/>
</dbReference>
<dbReference type="GO" id="GO:0070301">
    <property type="term" value="P:cellular response to hydrogen peroxide"/>
    <property type="evidence" value="ECO:0000250"/>
    <property type="project" value="UniProtKB"/>
</dbReference>
<dbReference type="GO" id="GO:0071373">
    <property type="term" value="P:cellular response to luteinizing hormone stimulus"/>
    <property type="evidence" value="ECO:0000270"/>
    <property type="project" value="RGD"/>
</dbReference>
<dbReference type="GO" id="GO:0071393">
    <property type="term" value="P:cellular response to progesterone stimulus"/>
    <property type="evidence" value="ECO:0000270"/>
    <property type="project" value="RGD"/>
</dbReference>
<dbReference type="GO" id="GO:0097237">
    <property type="term" value="P:cellular response to toxic substance"/>
    <property type="evidence" value="ECO:0000315"/>
    <property type="project" value="RGD"/>
</dbReference>
<dbReference type="GO" id="GO:0071356">
    <property type="term" value="P:cellular response to tumor necrosis factor"/>
    <property type="evidence" value="ECO:0000270"/>
    <property type="project" value="RGD"/>
</dbReference>
<dbReference type="GO" id="GO:0030199">
    <property type="term" value="P:collagen fibril organization"/>
    <property type="evidence" value="ECO:0000250"/>
    <property type="project" value="UniProtKB"/>
</dbReference>
<dbReference type="GO" id="GO:0006304">
    <property type="term" value="P:DNA modification"/>
    <property type="evidence" value="ECO:0000315"/>
    <property type="project" value="RGD"/>
</dbReference>
<dbReference type="GO" id="GO:0043542">
    <property type="term" value="P:endothelial cell migration"/>
    <property type="evidence" value="ECO:0000250"/>
    <property type="project" value="UniProtKB"/>
</dbReference>
<dbReference type="GO" id="GO:0071603">
    <property type="term" value="P:endothelial cell-cell adhesion"/>
    <property type="evidence" value="ECO:0000266"/>
    <property type="project" value="RGD"/>
</dbReference>
<dbReference type="GO" id="GO:0008210">
    <property type="term" value="P:estrogen metabolic process"/>
    <property type="evidence" value="ECO:0000314"/>
    <property type="project" value="RGD"/>
</dbReference>
<dbReference type="GO" id="GO:0044849">
    <property type="term" value="P:estrous cycle"/>
    <property type="evidence" value="ECO:0000270"/>
    <property type="project" value="RGD"/>
</dbReference>
<dbReference type="GO" id="GO:0061548">
    <property type="term" value="P:ganglion development"/>
    <property type="evidence" value="ECO:0000270"/>
    <property type="project" value="RGD"/>
</dbReference>
<dbReference type="GO" id="GO:0008631">
    <property type="term" value="P:intrinsic apoptotic signaling pathway in response to oxidative stress"/>
    <property type="evidence" value="ECO:0000250"/>
    <property type="project" value="UniProtKB"/>
</dbReference>
<dbReference type="GO" id="GO:0008584">
    <property type="term" value="P:male gonad development"/>
    <property type="evidence" value="ECO:0000270"/>
    <property type="project" value="RGD"/>
</dbReference>
<dbReference type="GO" id="GO:0046466">
    <property type="term" value="P:membrane lipid catabolic process"/>
    <property type="evidence" value="ECO:0000250"/>
    <property type="project" value="UniProtKB"/>
</dbReference>
<dbReference type="GO" id="GO:0033629">
    <property type="term" value="P:negative regulation of cell adhesion mediated by integrin"/>
    <property type="evidence" value="ECO:0000250"/>
    <property type="project" value="UniProtKB"/>
</dbReference>
<dbReference type="GO" id="GO:0030336">
    <property type="term" value="P:negative regulation of cell migration"/>
    <property type="evidence" value="ECO:0000250"/>
    <property type="project" value="UniProtKB"/>
</dbReference>
<dbReference type="GO" id="GO:0008285">
    <property type="term" value="P:negative regulation of cell population proliferation"/>
    <property type="evidence" value="ECO:0000250"/>
    <property type="project" value="UniProtKB"/>
</dbReference>
<dbReference type="GO" id="GO:0032088">
    <property type="term" value="P:negative regulation of NF-kappaB transcription factor activity"/>
    <property type="evidence" value="ECO:0000250"/>
    <property type="project" value="UniProtKB"/>
</dbReference>
<dbReference type="GO" id="GO:0006809">
    <property type="term" value="P:nitric oxide biosynthetic process"/>
    <property type="evidence" value="ECO:0000250"/>
    <property type="project" value="UniProtKB"/>
</dbReference>
<dbReference type="GO" id="GO:0045766">
    <property type="term" value="P:positive regulation of angiogenesis"/>
    <property type="evidence" value="ECO:0000250"/>
    <property type="project" value="UniProtKB"/>
</dbReference>
<dbReference type="GO" id="GO:0043065">
    <property type="term" value="P:positive regulation of apoptotic process"/>
    <property type="evidence" value="ECO:0000270"/>
    <property type="project" value="RGD"/>
</dbReference>
<dbReference type="GO" id="GO:2000573">
    <property type="term" value="P:positive regulation of DNA biosynthetic process"/>
    <property type="evidence" value="ECO:0000315"/>
    <property type="project" value="RGD"/>
</dbReference>
<dbReference type="GO" id="GO:2000379">
    <property type="term" value="P:positive regulation of reactive oxygen species metabolic process"/>
    <property type="evidence" value="ECO:0000315"/>
    <property type="project" value="RGD"/>
</dbReference>
<dbReference type="GO" id="GO:0046427">
    <property type="term" value="P:positive regulation of receptor signaling pathway via JAK-STAT"/>
    <property type="evidence" value="ECO:0000250"/>
    <property type="project" value="UniProtKB"/>
</dbReference>
<dbReference type="GO" id="GO:0014911">
    <property type="term" value="P:positive regulation of smooth muscle cell migration"/>
    <property type="evidence" value="ECO:0000315"/>
    <property type="project" value="RGD"/>
</dbReference>
<dbReference type="GO" id="GO:0045727">
    <property type="term" value="P:positive regulation of translation"/>
    <property type="evidence" value="ECO:0000315"/>
    <property type="project" value="RGD"/>
</dbReference>
<dbReference type="GO" id="GO:0010575">
    <property type="term" value="P:positive regulation of vascular endothelial growth factor production"/>
    <property type="evidence" value="ECO:0000250"/>
    <property type="project" value="UniProtKB"/>
</dbReference>
<dbReference type="GO" id="GO:2000377">
    <property type="term" value="P:regulation of reactive oxygen species metabolic process"/>
    <property type="evidence" value="ECO:0000250"/>
    <property type="project" value="UniProtKB"/>
</dbReference>
<dbReference type="GO" id="GO:1904681">
    <property type="term" value="P:response to 3-methylcholanthrene"/>
    <property type="evidence" value="ECO:0000270"/>
    <property type="project" value="RGD"/>
</dbReference>
<dbReference type="GO" id="GO:0046685">
    <property type="term" value="P:response to arsenic-containing substance"/>
    <property type="evidence" value="ECO:0000270"/>
    <property type="project" value="RGD"/>
</dbReference>
<dbReference type="GO" id="GO:0071548">
    <property type="term" value="P:response to dexamethasone"/>
    <property type="evidence" value="ECO:0000270"/>
    <property type="project" value="RGD"/>
</dbReference>
<dbReference type="GO" id="GO:0032355">
    <property type="term" value="P:response to estradiol"/>
    <property type="evidence" value="ECO:0000270"/>
    <property type="project" value="RGD"/>
</dbReference>
<dbReference type="GO" id="GO:0032354">
    <property type="term" value="P:response to follicle-stimulating hormone"/>
    <property type="evidence" value="ECO:0000270"/>
    <property type="project" value="RGD"/>
</dbReference>
<dbReference type="GO" id="GO:0071680">
    <property type="term" value="P:response to indole-3-methanol"/>
    <property type="evidence" value="ECO:0000270"/>
    <property type="project" value="RGD"/>
</dbReference>
<dbReference type="GO" id="GO:0007584">
    <property type="term" value="P:response to nutrient"/>
    <property type="evidence" value="ECO:0000270"/>
    <property type="project" value="RGD"/>
</dbReference>
<dbReference type="GO" id="GO:0048545">
    <property type="term" value="P:response to steroid hormone"/>
    <property type="evidence" value="ECO:0000270"/>
    <property type="project" value="RGD"/>
</dbReference>
<dbReference type="GO" id="GO:0009636">
    <property type="term" value="P:response to toxic substance"/>
    <property type="evidence" value="ECO:0000270"/>
    <property type="project" value="RGD"/>
</dbReference>
<dbReference type="GO" id="GO:0061298">
    <property type="term" value="P:retina vasculature development in camera-type eye"/>
    <property type="evidence" value="ECO:0000266"/>
    <property type="project" value="RGD"/>
</dbReference>
<dbReference type="GO" id="GO:0061304">
    <property type="term" value="P:retinal blood vessel morphogenesis"/>
    <property type="evidence" value="ECO:0000250"/>
    <property type="project" value="UniProtKB"/>
</dbReference>
<dbReference type="GO" id="GO:0042574">
    <property type="term" value="P:retinal metabolic process"/>
    <property type="evidence" value="ECO:0000250"/>
    <property type="project" value="UniProtKB"/>
</dbReference>
<dbReference type="GO" id="GO:0042572">
    <property type="term" value="P:retinol metabolic process"/>
    <property type="evidence" value="ECO:0000250"/>
    <property type="project" value="UniProtKB"/>
</dbReference>
<dbReference type="GO" id="GO:0008202">
    <property type="term" value="P:steroid metabolic process"/>
    <property type="evidence" value="ECO:0000250"/>
    <property type="project" value="UniProtKB"/>
</dbReference>
<dbReference type="GO" id="GO:0009404">
    <property type="term" value="P:toxin metabolic process"/>
    <property type="evidence" value="ECO:0000266"/>
    <property type="project" value="RGD"/>
</dbReference>
<dbReference type="GO" id="GO:0002930">
    <property type="term" value="P:trabecular meshwork development"/>
    <property type="evidence" value="ECO:0000250"/>
    <property type="project" value="UniProtKB"/>
</dbReference>
<dbReference type="GO" id="GO:0006805">
    <property type="term" value="P:xenobiotic metabolic process"/>
    <property type="evidence" value="ECO:0000250"/>
    <property type="project" value="UniProtKB"/>
</dbReference>
<dbReference type="CDD" id="cd20675">
    <property type="entry name" value="CYP1B1-like"/>
    <property type="match status" value="1"/>
</dbReference>
<dbReference type="FunFam" id="1.10.630.10:FF:000238">
    <property type="entry name" value="Cytochrome P450 2A6"/>
    <property type="match status" value="1"/>
</dbReference>
<dbReference type="Gene3D" id="1.10.630.10">
    <property type="entry name" value="Cytochrome P450"/>
    <property type="match status" value="1"/>
</dbReference>
<dbReference type="InterPro" id="IPR001128">
    <property type="entry name" value="Cyt_P450"/>
</dbReference>
<dbReference type="InterPro" id="IPR017972">
    <property type="entry name" value="Cyt_P450_CS"/>
</dbReference>
<dbReference type="InterPro" id="IPR002401">
    <property type="entry name" value="Cyt_P450_E_grp-I"/>
</dbReference>
<dbReference type="InterPro" id="IPR036396">
    <property type="entry name" value="Cyt_P450_sf"/>
</dbReference>
<dbReference type="PANTHER" id="PTHR24289:SF16">
    <property type="entry name" value="CYTOCHROME P450 1B1"/>
    <property type="match status" value="1"/>
</dbReference>
<dbReference type="PANTHER" id="PTHR24289">
    <property type="entry name" value="STEROID 17-ALPHA-HYDROXYLASE/17,20 LYASE"/>
    <property type="match status" value="1"/>
</dbReference>
<dbReference type="Pfam" id="PF00067">
    <property type="entry name" value="p450"/>
    <property type="match status" value="1"/>
</dbReference>
<dbReference type="PRINTS" id="PR00463">
    <property type="entry name" value="EP450I"/>
</dbReference>
<dbReference type="PRINTS" id="PR00385">
    <property type="entry name" value="P450"/>
</dbReference>
<dbReference type="SUPFAM" id="SSF48264">
    <property type="entry name" value="Cytochrome P450"/>
    <property type="match status" value="1"/>
</dbReference>
<dbReference type="PROSITE" id="PS00086">
    <property type="entry name" value="CYTOCHROME_P450"/>
    <property type="match status" value="1"/>
</dbReference>
<evidence type="ECO:0000250" key="1"/>
<evidence type="ECO:0000250" key="2">
    <source>
        <dbReference type="UniProtKB" id="Q16678"/>
    </source>
</evidence>
<evidence type="ECO:0000250" key="3">
    <source>
        <dbReference type="UniProtKB" id="Q64429"/>
    </source>
</evidence>
<evidence type="ECO:0000269" key="4">
    <source>
    </source>
</evidence>
<evidence type="ECO:0000269" key="5">
    <source>
    </source>
</evidence>
<evidence type="ECO:0000269" key="6">
    <source>
    </source>
</evidence>
<evidence type="ECO:0000269" key="7">
    <source>
    </source>
</evidence>
<evidence type="ECO:0000269" key="8">
    <source>
    </source>
</evidence>
<evidence type="ECO:0000303" key="9">
    <source>
    </source>
</evidence>
<evidence type="ECO:0000305" key="10"/>
<evidence type="ECO:0000305" key="11">
    <source>
    </source>
</evidence>
<evidence type="ECO:0000305" key="12">
    <source>
    </source>
</evidence>
<evidence type="ECO:0000312" key="13">
    <source>
        <dbReference type="RGD" id="2460"/>
    </source>
</evidence>
<protein>
    <recommendedName>
        <fullName>Cytochrome P450 1B1</fullName>
        <ecNumber evidence="8">1.14.14.1</ecNumber>
    </recommendedName>
    <alternativeName>
        <fullName>CYPIB1</fullName>
    </alternativeName>
    <alternativeName>
        <fullName>Cytochrome P450RAP</fullName>
    </alternativeName>
    <alternativeName>
        <fullName>Hydroperoxy icosatetraenoate dehydratase</fullName>
        <ecNumber evidence="2">4.2.1.152</ecNumber>
    </alternativeName>
</protein>
<sequence length="543" mass="60557">MATSLSADSPQQLSSLSTQQTILLLLVSVLAIVHLGQWLLRQWRRKPWSSPPGPFPWPLIGNAASVGRASHLYFARLARRYGDVFQIRLGSCPVVVLNGESAIHQALVQQGGVFADRPPFASFRVVSGGRSLAFGHYSERWKERRRAAYGTMRAFSTRHPRSRGLLEGHALGEARELVAVLVRRCAGGACLDPTQPIIVAVANVMSAVCFGCRYNHDDAEFLELLSHNEEFGRTVGAGSLVDVMPWLQLFPNPVRTIFREFEQINRNFSNFVLDKFLRHRESLVPGAAPRDMMDAFILSAEKKATGDPGDSPSGLDLEDVPATITDIFGASQDTLSTALLWLLILFTRYPDVQARVQAELDQVVGRDRLPCMSDQPNLPYVMAFLYESMRFTSFLPVTLPHATTANTFVLGYYIPKNTVVFVNQWSVNHDPAKWSNPEDFDPARFLDKDGFINKALASSVMIFSVGKRRCIGEELSKTLLFLFISILAHQCNFKANQNEPSNMSFSYGLSIKPKSFKIHVSLRESMKLLDSAVEKLQAEEACQ</sequence>
<comment type="function">
    <text evidence="2 3 4 8">A cytochrome P450 monooxygenase involved in the metabolism of various endogenous substrates, including fatty acids, steroid hormones and vitamins (By similarity). Mechanistically, uses molecular oxygen inserting one oxygen atom into a substrate, and reducing the second into a water molecule, with two electrons provided by NADPH via cytochrome P450 reductase (NADPH--hemoprotein reductase) (By similarity). Exhibits catalytic activity for the formation of hydroxyestrogens from 17beta-estradiol (E2), namely 2- and 4-hydroxy E2 (PubMed:23821647). Metabolizes testosterone and progesterone to B or D ring hydroxylated metabolites (By similarity). May act as a major enzyme for all-trans retinoic acid biosynthesis in extrahepatic tissues. Catalyzes two successive oxidative transformation of all-trans retinol to all-trans retinal and then to the active form all-trans retinoic acid (By similarity). Catalyzes the epoxidation of double bonds of certain PUFA. Converts arachidonic acid toward epoxyeicosatrienoic acid (EpETrE) regioisomers, 8,9-, 11,12-, and 14,15- EpETrE, that function as lipid mediators in the vascular system (PubMed:20972997). Additionally, displays dehydratase activity toward oxygenated eicosanoids including hydroperoxyeicosatetraenoates (HpETEs). This activity is independent of cytochrome P450 reductase, NADPH, and O2 (By similarity). Also involved in the oxidative metabolism of xenobiotics, particularly converting polycyclic aromatic hydrocarbons and heterocyclic aryl amines procarcinogens to DNA-damaging products (By similarity). Plays an important role in retinal vascular development. Under ambient/hyperoxic O2 conditions, promotes angiogenesis and capillary morphogenesis of retinal endothelial cells and pericytes, likely by metabolizing the oxygenated products symptomatic of oxidative stress (By similarity). Also, contributes to oxidative homeostasis and ultrastructural organization and function of trabecular meshwork tissue through modulation of POSTN expression (By similarity).</text>
</comment>
<comment type="catalytic activity">
    <reaction evidence="8">
        <text>an organic molecule + reduced [NADPH--hemoprotein reductase] + O2 = an alcohol + oxidized [NADPH--hemoprotein reductase] + H2O + H(+)</text>
        <dbReference type="Rhea" id="RHEA:17149"/>
        <dbReference type="Rhea" id="RHEA-COMP:11964"/>
        <dbReference type="Rhea" id="RHEA-COMP:11965"/>
        <dbReference type="ChEBI" id="CHEBI:15377"/>
        <dbReference type="ChEBI" id="CHEBI:15378"/>
        <dbReference type="ChEBI" id="CHEBI:15379"/>
        <dbReference type="ChEBI" id="CHEBI:30879"/>
        <dbReference type="ChEBI" id="CHEBI:57618"/>
        <dbReference type="ChEBI" id="CHEBI:58210"/>
        <dbReference type="ChEBI" id="CHEBI:142491"/>
        <dbReference type="EC" id="1.14.14.1"/>
    </reaction>
    <physiologicalReaction direction="left-to-right" evidence="12">
        <dbReference type="Rhea" id="RHEA:17150"/>
    </physiologicalReaction>
</comment>
<comment type="catalytic activity">
    <reaction evidence="8">
        <text>17beta-estradiol + reduced [NADPH--hemoprotein reductase] + O2 = 2-hydroxy-17beta-estradiol + oxidized [NADPH--hemoprotein reductase] + H2O + H(+)</text>
        <dbReference type="Rhea" id="RHEA:47212"/>
        <dbReference type="Rhea" id="RHEA-COMP:11964"/>
        <dbReference type="Rhea" id="RHEA-COMP:11965"/>
        <dbReference type="ChEBI" id="CHEBI:15377"/>
        <dbReference type="ChEBI" id="CHEBI:15378"/>
        <dbReference type="ChEBI" id="CHEBI:15379"/>
        <dbReference type="ChEBI" id="CHEBI:16469"/>
        <dbReference type="ChEBI" id="CHEBI:28744"/>
        <dbReference type="ChEBI" id="CHEBI:57618"/>
        <dbReference type="ChEBI" id="CHEBI:58210"/>
    </reaction>
    <physiologicalReaction direction="left-to-right" evidence="12">
        <dbReference type="Rhea" id="RHEA:47213"/>
    </physiologicalReaction>
</comment>
<comment type="catalytic activity">
    <reaction evidence="8">
        <text>17beta-estradiol + reduced [NADPH--hemoprotein reductase] + O2 = 4-hydroxy-17beta-estradiol + oxidized [NADPH--hemoprotein reductase] + H2O + H(+)</text>
        <dbReference type="Rhea" id="RHEA:47280"/>
        <dbReference type="Rhea" id="RHEA-COMP:11964"/>
        <dbReference type="Rhea" id="RHEA-COMP:11965"/>
        <dbReference type="ChEBI" id="CHEBI:15377"/>
        <dbReference type="ChEBI" id="CHEBI:15378"/>
        <dbReference type="ChEBI" id="CHEBI:15379"/>
        <dbReference type="ChEBI" id="CHEBI:16469"/>
        <dbReference type="ChEBI" id="CHEBI:57618"/>
        <dbReference type="ChEBI" id="CHEBI:58210"/>
        <dbReference type="ChEBI" id="CHEBI:62845"/>
    </reaction>
    <physiologicalReaction direction="left-to-right" evidence="12">
        <dbReference type="Rhea" id="RHEA:47281"/>
    </physiologicalReaction>
</comment>
<comment type="catalytic activity">
    <reaction evidence="2">
        <text>estrone + reduced [NADPH--hemoprotein reductase] + O2 = 2-hydroxyestrone + oxidized [NADPH--hemoprotein reductase] + H2O + H(+)</text>
        <dbReference type="Rhea" id="RHEA:47208"/>
        <dbReference type="Rhea" id="RHEA-COMP:11964"/>
        <dbReference type="Rhea" id="RHEA-COMP:11965"/>
        <dbReference type="ChEBI" id="CHEBI:1156"/>
        <dbReference type="ChEBI" id="CHEBI:15377"/>
        <dbReference type="ChEBI" id="CHEBI:15378"/>
        <dbReference type="ChEBI" id="CHEBI:15379"/>
        <dbReference type="ChEBI" id="CHEBI:17263"/>
        <dbReference type="ChEBI" id="CHEBI:57618"/>
        <dbReference type="ChEBI" id="CHEBI:58210"/>
    </reaction>
    <physiologicalReaction direction="left-to-right" evidence="2">
        <dbReference type="Rhea" id="RHEA:47209"/>
    </physiologicalReaction>
</comment>
<comment type="catalytic activity">
    <reaction evidence="2">
        <text>estrone + reduced [NADPH--hemoprotein reductase] + O2 = 4-hydroxyestrone + oxidized [NADPH--hemoprotein reductase] + H2O + H(+)</text>
        <dbReference type="Rhea" id="RHEA:47292"/>
        <dbReference type="Rhea" id="RHEA-COMP:11964"/>
        <dbReference type="Rhea" id="RHEA-COMP:11965"/>
        <dbReference type="ChEBI" id="CHEBI:15377"/>
        <dbReference type="ChEBI" id="CHEBI:15378"/>
        <dbReference type="ChEBI" id="CHEBI:15379"/>
        <dbReference type="ChEBI" id="CHEBI:17263"/>
        <dbReference type="ChEBI" id="CHEBI:57618"/>
        <dbReference type="ChEBI" id="CHEBI:58210"/>
        <dbReference type="ChEBI" id="CHEBI:87602"/>
    </reaction>
    <physiologicalReaction direction="left-to-right" evidence="2">
        <dbReference type="Rhea" id="RHEA:47293"/>
    </physiologicalReaction>
</comment>
<comment type="catalytic activity">
    <reaction evidence="2">
        <text>testosterone + reduced [NADPH--hemoprotein reductase] + O2 = 6beta,17beta-dihydroxyandrost-4-en-3-one + oxidized [NADPH--hemoprotein reductase] + H2O + H(+)</text>
        <dbReference type="Rhea" id="RHEA:46296"/>
        <dbReference type="Rhea" id="RHEA-COMP:11964"/>
        <dbReference type="Rhea" id="RHEA-COMP:11965"/>
        <dbReference type="ChEBI" id="CHEBI:15377"/>
        <dbReference type="ChEBI" id="CHEBI:15378"/>
        <dbReference type="ChEBI" id="CHEBI:15379"/>
        <dbReference type="ChEBI" id="CHEBI:17347"/>
        <dbReference type="ChEBI" id="CHEBI:34477"/>
        <dbReference type="ChEBI" id="CHEBI:57618"/>
        <dbReference type="ChEBI" id="CHEBI:58210"/>
    </reaction>
    <physiologicalReaction direction="left-to-right" evidence="2">
        <dbReference type="Rhea" id="RHEA:46297"/>
    </physiologicalReaction>
</comment>
<comment type="catalytic activity">
    <reaction evidence="2">
        <text>progesterone + reduced [NADPH--hemoprotein reductase] + O2 = 6beta-hydroxyprogesterone + oxidized [NADPH--hemoprotein reductase] + H2O + H(+)</text>
        <dbReference type="Rhea" id="RHEA:47252"/>
        <dbReference type="Rhea" id="RHEA-COMP:11964"/>
        <dbReference type="Rhea" id="RHEA-COMP:11965"/>
        <dbReference type="ChEBI" id="CHEBI:15377"/>
        <dbReference type="ChEBI" id="CHEBI:15378"/>
        <dbReference type="ChEBI" id="CHEBI:15379"/>
        <dbReference type="ChEBI" id="CHEBI:17026"/>
        <dbReference type="ChEBI" id="CHEBI:57618"/>
        <dbReference type="ChEBI" id="CHEBI:58210"/>
        <dbReference type="ChEBI" id="CHEBI:62117"/>
    </reaction>
    <physiologicalReaction direction="left-to-right" evidence="2">
        <dbReference type="Rhea" id="RHEA:47253"/>
    </physiologicalReaction>
</comment>
<comment type="catalytic activity">
    <reaction evidence="2">
        <text>progesterone + reduced [NADPH--hemoprotein reductase] + O2 = 16alpha-hydroxyprogesterone + oxidized [NADPH--hemoprotein reductase] + H2O + H(+)</text>
        <dbReference type="Rhea" id="RHEA:47260"/>
        <dbReference type="Rhea" id="RHEA-COMP:11964"/>
        <dbReference type="Rhea" id="RHEA-COMP:11965"/>
        <dbReference type="ChEBI" id="CHEBI:15377"/>
        <dbReference type="ChEBI" id="CHEBI:15378"/>
        <dbReference type="ChEBI" id="CHEBI:15379"/>
        <dbReference type="ChEBI" id="CHEBI:15826"/>
        <dbReference type="ChEBI" id="CHEBI:17026"/>
        <dbReference type="ChEBI" id="CHEBI:57618"/>
        <dbReference type="ChEBI" id="CHEBI:58210"/>
    </reaction>
    <physiologicalReaction direction="left-to-right" evidence="2">
        <dbReference type="Rhea" id="RHEA:47261"/>
    </physiologicalReaction>
</comment>
<comment type="catalytic activity">
    <reaction evidence="2">
        <text>all-trans-retinol + reduced [NADPH--hemoprotein reductase] + O2 = all-trans-retinal + oxidized [NADPH--hemoprotein reductase] + 2 H2O + H(+)</text>
        <dbReference type="Rhea" id="RHEA:42092"/>
        <dbReference type="Rhea" id="RHEA-COMP:11964"/>
        <dbReference type="Rhea" id="RHEA-COMP:11965"/>
        <dbReference type="ChEBI" id="CHEBI:15377"/>
        <dbReference type="ChEBI" id="CHEBI:15378"/>
        <dbReference type="ChEBI" id="CHEBI:15379"/>
        <dbReference type="ChEBI" id="CHEBI:17336"/>
        <dbReference type="ChEBI" id="CHEBI:17898"/>
        <dbReference type="ChEBI" id="CHEBI:57618"/>
        <dbReference type="ChEBI" id="CHEBI:58210"/>
    </reaction>
    <physiologicalReaction direction="left-to-right" evidence="2">
        <dbReference type="Rhea" id="RHEA:42093"/>
    </physiologicalReaction>
</comment>
<comment type="catalytic activity">
    <reaction evidence="2">
        <text>all-trans-retinal + reduced [NADPH--hemoprotein reductase] + O2 = all-trans-retinoate + oxidized [NADPH--hemoprotein reductase] + H2O + 2 H(+)</text>
        <dbReference type="Rhea" id="RHEA:42088"/>
        <dbReference type="Rhea" id="RHEA-COMP:11964"/>
        <dbReference type="Rhea" id="RHEA-COMP:11965"/>
        <dbReference type="ChEBI" id="CHEBI:15377"/>
        <dbReference type="ChEBI" id="CHEBI:15378"/>
        <dbReference type="ChEBI" id="CHEBI:15379"/>
        <dbReference type="ChEBI" id="CHEBI:17898"/>
        <dbReference type="ChEBI" id="CHEBI:35291"/>
        <dbReference type="ChEBI" id="CHEBI:57618"/>
        <dbReference type="ChEBI" id="CHEBI:58210"/>
    </reaction>
    <physiologicalReaction direction="left-to-right" evidence="2">
        <dbReference type="Rhea" id="RHEA:42089"/>
    </physiologicalReaction>
</comment>
<comment type="catalytic activity">
    <reaction evidence="4">
        <text>(5Z,8Z,11Z,14Z)-eicosatetraenoate + reduced [NADPH--hemoprotein reductase] + O2 = (8R,9S)-epoxy-(5Z,11Z,14Z)-eicosatrienoate + oxidized [NADPH--hemoprotein reductase] + H2O + H(+)</text>
        <dbReference type="Rhea" id="RHEA:49884"/>
        <dbReference type="Rhea" id="RHEA-COMP:11964"/>
        <dbReference type="Rhea" id="RHEA-COMP:11965"/>
        <dbReference type="ChEBI" id="CHEBI:15377"/>
        <dbReference type="ChEBI" id="CHEBI:15378"/>
        <dbReference type="ChEBI" id="CHEBI:15379"/>
        <dbReference type="ChEBI" id="CHEBI:32395"/>
        <dbReference type="ChEBI" id="CHEBI:57618"/>
        <dbReference type="ChEBI" id="CHEBI:58210"/>
        <dbReference type="ChEBI" id="CHEBI:131975"/>
    </reaction>
    <physiologicalReaction direction="left-to-right" evidence="11">
        <dbReference type="Rhea" id="RHEA:49885"/>
    </physiologicalReaction>
</comment>
<comment type="catalytic activity">
    <reaction evidence="4">
        <text>(5Z,8Z,11Z,14Z)-eicosatetraenoate + reduced [NADPH--hemoprotein reductase] + O2 = (11R,12S)-epoxy-(5Z,8Z,14Z)-eicosatrienoate + oxidized [NADPH--hemoprotein reductase] + H2O + H(+)</text>
        <dbReference type="Rhea" id="RHEA:49880"/>
        <dbReference type="Rhea" id="RHEA-COMP:11964"/>
        <dbReference type="Rhea" id="RHEA-COMP:11965"/>
        <dbReference type="ChEBI" id="CHEBI:15377"/>
        <dbReference type="ChEBI" id="CHEBI:15378"/>
        <dbReference type="ChEBI" id="CHEBI:15379"/>
        <dbReference type="ChEBI" id="CHEBI:32395"/>
        <dbReference type="ChEBI" id="CHEBI:57618"/>
        <dbReference type="ChEBI" id="CHEBI:58210"/>
        <dbReference type="ChEBI" id="CHEBI:131970"/>
    </reaction>
    <physiologicalReaction direction="left-to-right" evidence="11">
        <dbReference type="Rhea" id="RHEA:49881"/>
    </physiologicalReaction>
</comment>
<comment type="catalytic activity">
    <reaction evidence="4">
        <text>(5Z,8Z,11Z,14Z)-eicosatetraenoate + reduced [NADPH--hemoprotein reductase] + O2 = (11S,12R)-epoxy-(5Z,8Z,14Z)-eicosatrienoate + oxidized [NADPH--hemoprotein reductase] + H2O + H(+)</text>
        <dbReference type="Rhea" id="RHEA:49876"/>
        <dbReference type="Rhea" id="RHEA-COMP:11964"/>
        <dbReference type="Rhea" id="RHEA-COMP:11965"/>
        <dbReference type="ChEBI" id="CHEBI:15377"/>
        <dbReference type="ChEBI" id="CHEBI:15378"/>
        <dbReference type="ChEBI" id="CHEBI:15379"/>
        <dbReference type="ChEBI" id="CHEBI:32395"/>
        <dbReference type="ChEBI" id="CHEBI:57618"/>
        <dbReference type="ChEBI" id="CHEBI:58210"/>
        <dbReference type="ChEBI" id="CHEBI:131969"/>
    </reaction>
    <physiologicalReaction direction="left-to-right" evidence="11">
        <dbReference type="Rhea" id="RHEA:49877"/>
    </physiologicalReaction>
</comment>
<comment type="catalytic activity">
    <reaction evidence="4">
        <text>(5Z,8Z,11Z,14Z)-eicosatetraenoate + reduced [NADPH--hemoprotein reductase] + O2 = (14S,15R)-epoxy-(5Z,8Z,11Z)-eicosatrienoate + oxidized [NADPH--hemoprotein reductase] + H2O + H(+)</text>
        <dbReference type="Rhea" id="RHEA:49856"/>
        <dbReference type="Rhea" id="RHEA-COMP:11964"/>
        <dbReference type="Rhea" id="RHEA-COMP:11965"/>
        <dbReference type="ChEBI" id="CHEBI:15377"/>
        <dbReference type="ChEBI" id="CHEBI:15378"/>
        <dbReference type="ChEBI" id="CHEBI:15379"/>
        <dbReference type="ChEBI" id="CHEBI:32395"/>
        <dbReference type="ChEBI" id="CHEBI:57618"/>
        <dbReference type="ChEBI" id="CHEBI:58210"/>
        <dbReference type="ChEBI" id="CHEBI:131964"/>
    </reaction>
    <physiologicalReaction direction="left-to-right" evidence="11">
        <dbReference type="Rhea" id="RHEA:49857"/>
    </physiologicalReaction>
</comment>
<comment type="catalytic activity">
    <reaction evidence="4">
        <text>(5Z,8Z,11Z,14Z)-eicosatetraenoate + reduced [NADPH--hemoprotein reductase] + O2 = (14R,15S)-epoxy-(5Z,8Z,11Z)-eicosatrienoate + oxidized [NADPH--hemoprotein reductase] + H2O + H(+)</text>
        <dbReference type="Rhea" id="RHEA:49860"/>
        <dbReference type="Rhea" id="RHEA-COMP:11964"/>
        <dbReference type="Rhea" id="RHEA-COMP:11965"/>
        <dbReference type="ChEBI" id="CHEBI:15377"/>
        <dbReference type="ChEBI" id="CHEBI:15378"/>
        <dbReference type="ChEBI" id="CHEBI:15379"/>
        <dbReference type="ChEBI" id="CHEBI:32395"/>
        <dbReference type="ChEBI" id="CHEBI:57618"/>
        <dbReference type="ChEBI" id="CHEBI:58210"/>
        <dbReference type="ChEBI" id="CHEBI:131965"/>
    </reaction>
    <physiologicalReaction direction="left-to-right" evidence="11">
        <dbReference type="Rhea" id="RHEA:49861"/>
    </physiologicalReaction>
</comment>
<comment type="catalytic activity">
    <reaction evidence="2">
        <text>(5S)-hydroperoxy-(6E,8Z,11Z,14Z)-eicosatetraenoate = 5-oxo-(6E,8Z,11Z,14Z)-eicosatetraenoate + H2O</text>
        <dbReference type="Rhea" id="RHEA:48632"/>
        <dbReference type="ChEBI" id="CHEBI:15377"/>
        <dbReference type="ChEBI" id="CHEBI:57450"/>
        <dbReference type="ChEBI" id="CHEBI:65342"/>
    </reaction>
    <physiologicalReaction direction="left-to-right" evidence="2">
        <dbReference type="Rhea" id="RHEA:48633"/>
    </physiologicalReaction>
</comment>
<comment type="catalytic activity">
    <reaction evidence="2">
        <text>(12S)-hydroperoxy-(5Z,8Z,10E,14Z)-eicosatetraenoate = 12-oxo-(5Z,8Z,10E,14Z)-eicosatetraenoate + H2O</text>
        <dbReference type="Rhea" id="RHEA:37947"/>
        <dbReference type="ChEBI" id="CHEBI:15377"/>
        <dbReference type="ChEBI" id="CHEBI:57444"/>
        <dbReference type="ChEBI" id="CHEBI:75231"/>
        <dbReference type="EC" id="4.2.1.152"/>
    </reaction>
    <physiologicalReaction direction="left-to-right" evidence="2">
        <dbReference type="Rhea" id="RHEA:37948"/>
    </physiologicalReaction>
</comment>
<comment type="catalytic activity">
    <reaction evidence="2">
        <text>(15S)-hydroperoxy-(5Z,8Z,11Z,13E)-eicosatetraenoate = 15-oxo-(5Z,8Z,11Z,13E)-eicosatetraenoate + H2O</text>
        <dbReference type="Rhea" id="RHEA:48636"/>
        <dbReference type="ChEBI" id="CHEBI:15377"/>
        <dbReference type="ChEBI" id="CHEBI:57410"/>
        <dbReference type="ChEBI" id="CHEBI:57446"/>
    </reaction>
    <physiologicalReaction direction="left-to-right" evidence="2">
        <dbReference type="Rhea" id="RHEA:48637"/>
    </physiologicalReaction>
</comment>
<comment type="catalytic activity">
    <reaction evidence="2">
        <text>(13S)-hydroperoxy-(9Z,11E)-octadecadienoate = 13-oxo-(9Z,11E)-octadecadienoate + H2O</text>
        <dbReference type="Rhea" id="RHEA:48716"/>
        <dbReference type="ChEBI" id="CHEBI:15377"/>
        <dbReference type="ChEBI" id="CHEBI:57466"/>
        <dbReference type="ChEBI" id="CHEBI:90781"/>
    </reaction>
    <physiologicalReaction direction="left-to-right" evidence="2">
        <dbReference type="Rhea" id="RHEA:48717"/>
    </physiologicalReaction>
</comment>
<comment type="cofactor">
    <cofactor evidence="1">
        <name>heme</name>
        <dbReference type="ChEBI" id="CHEBI:30413"/>
    </cofactor>
</comment>
<comment type="activity regulation">
    <text evidence="2 8">Enzyme activity is increased by cytochrome b5 (PubMed:23821647). Enzyme activity is increased by liposomes containing anionic phospholipids, phosphatidic acid and cardiolipin. Inhibited by naringenin with an IC(50) of 5 uM (By similarity).</text>
</comment>
<comment type="pathway">
    <text evidence="2">Steroid hormone biosynthesis.</text>
</comment>
<comment type="pathway">
    <text evidence="2">Cofactor metabolism; retinol metabolism.</text>
</comment>
<comment type="pathway">
    <text evidence="2">Lipid metabolism; arachidonate metabolism.</text>
</comment>
<comment type="subcellular location">
    <subcellularLocation>
        <location evidence="3">Endoplasmic reticulum membrane</location>
        <topology evidence="3">Peripheral membrane protein</topology>
    </subcellularLocation>
    <subcellularLocation>
        <location evidence="3">Microsome membrane</location>
        <topology evidence="3">Peripheral membrane protein</topology>
    </subcellularLocation>
    <subcellularLocation>
        <location evidence="3">Mitochondrion</location>
    </subcellularLocation>
    <text evidence="3">Located primarily in endoplasmic reticulum. Upon treatment with 2,3,7,8-tetrachlorodibenzo-p-dioxin (TCDD), CYP1B1 is also targeted to mitochondria.</text>
</comment>
<comment type="induction">
    <text evidence="5 6 7">By polycyclic aromatic hydrocarbons (PAH), beta-naphthoflavone and 2,3,7,8-tetrachlorodibenzo-p-dioxin (TCDD). Up-regulated by diesel exhaust particles (DEP). Decreased by estradiol (at protein level).</text>
</comment>
<comment type="similarity">
    <text evidence="10">Belongs to the cytochrome P450 family.</text>
</comment>
<feature type="chain" id="PRO_0000051662" description="Cytochrome P450 1B1">
    <location>
        <begin position="1"/>
        <end position="543"/>
    </location>
</feature>
<feature type="binding site" description="axial binding residue" evidence="1">
    <location>
        <position position="470"/>
    </location>
    <ligand>
        <name>heme</name>
        <dbReference type="ChEBI" id="CHEBI:30413"/>
    </ligand>
    <ligandPart>
        <name>Fe</name>
        <dbReference type="ChEBI" id="CHEBI:18248"/>
    </ligandPart>
</feature>
<feature type="site" description="Major determinant of CYP1B1 17beta-estradiol hydroxylation regiospecificity">
    <location>
        <position position="395"/>
    </location>
</feature>
<feature type="mutagenesis site" description="Shifts the 4OH E2:2OH E2 hydroxylation ratio from 0.38 to 1.8. Has the 4OH-hydroxylation specificity of the human enzyme." evidence="8">
    <original>L</original>
    <variation>V</variation>
    <location>
        <position position="395"/>
    </location>
</feature>
<organism>
    <name type="scientific">Rattus norvegicus</name>
    <name type="common">Rat</name>
    <dbReference type="NCBI Taxonomy" id="10116"/>
    <lineage>
        <taxon>Eukaryota</taxon>
        <taxon>Metazoa</taxon>
        <taxon>Chordata</taxon>
        <taxon>Craniata</taxon>
        <taxon>Vertebrata</taxon>
        <taxon>Euteleostomi</taxon>
        <taxon>Mammalia</taxon>
        <taxon>Eutheria</taxon>
        <taxon>Euarchontoglires</taxon>
        <taxon>Glires</taxon>
        <taxon>Rodentia</taxon>
        <taxon>Myomorpha</taxon>
        <taxon>Muroidea</taxon>
        <taxon>Muridae</taxon>
        <taxon>Murinae</taxon>
        <taxon>Rattus</taxon>
    </lineage>
</organism>
<accession>Q64678</accession>